<proteinExistence type="evidence at protein level"/>
<protein>
    <recommendedName>
        <fullName>Cuticle protein 16.5, isoform B</fullName>
    </recommendedName>
    <alternativeName>
        <fullName>LM-ACP 16.5B</fullName>
        <shortName>LM-16.5B</shortName>
    </alternativeName>
</protein>
<organism>
    <name type="scientific">Locusta migratoria</name>
    <name type="common">Migratory locust</name>
    <dbReference type="NCBI Taxonomy" id="7004"/>
    <lineage>
        <taxon>Eukaryota</taxon>
        <taxon>Metazoa</taxon>
        <taxon>Ecdysozoa</taxon>
        <taxon>Arthropoda</taxon>
        <taxon>Hexapoda</taxon>
        <taxon>Insecta</taxon>
        <taxon>Pterygota</taxon>
        <taxon>Neoptera</taxon>
        <taxon>Polyneoptera</taxon>
        <taxon>Orthoptera</taxon>
        <taxon>Caelifera</taxon>
        <taxon>Acrididea</taxon>
        <taxon>Acridomorpha</taxon>
        <taxon>Acridoidea</taxon>
        <taxon>Acrididae</taxon>
        <taxon>Oedipodinae</taxon>
        <taxon>Locusta</taxon>
    </lineage>
</organism>
<keyword id="KW-0193">Cuticle</keyword>
<keyword id="KW-0903">Direct protein sequencing</keyword>
<keyword id="KW-0677">Repeat</keyword>
<accession>P83993</accession>
<evidence type="ECO:0000269" key="1">
    <source>
    </source>
</evidence>
<evidence type="ECO:0000305" key="2"/>
<reference evidence="2" key="1">
    <citation type="journal article" date="2003" name="Biochim. Biophys. Acta">
        <title>Sequence determination of three cuticular proteins and isoforms from the migratory locust, Locusta migratoria, using a combination of Edman degradation and mass spectrometric techniques.</title>
        <authorList>
            <person name="Kalume D.E."/>
            <person name="Kieffer S."/>
            <person name="Rafn K."/>
            <person name="Skou L."/>
            <person name="Andersen S.O."/>
            <person name="Roepstorff P."/>
        </authorList>
    </citation>
    <scope>PROTEIN SEQUENCE</scope>
    <scope>FUNCTION</scope>
    <scope>MASS SPECTROMETRY</scope>
    <source>
        <tissue evidence="1">Pharate adult cuticle</tissue>
    </source>
</reference>
<sequence>GLLGLGYGGYGYGAALAAPAAVSYAAPAIAAAPAVSYAAPAIAAAPAISYAAPAIAAAPAISYAAPAIAAAPAVSYAAPAIAAAPAISYAAAPALRYAAAPAIRYAAPAVARVAPAISYAAVAVARVAPAVSYAAPALSYARYAAPAVSYAAPALSYAAPALSYAAPAIAKYALH</sequence>
<dbReference type="GO" id="GO:0042302">
    <property type="term" value="F:structural constituent of cuticle"/>
    <property type="evidence" value="ECO:0007669"/>
    <property type="project" value="UniProtKB-KW"/>
</dbReference>
<name>CU16B_LOCMI</name>
<feature type="chain" id="PRO_0000196097" description="Cuticle protein 16.5, isoform B">
    <location>
        <begin position="1"/>
        <end position="175"/>
    </location>
</feature>
<feature type="repeat" description="1" evidence="2">
    <location>
        <begin position="17"/>
        <end position="20"/>
    </location>
</feature>
<feature type="repeat" description="2" evidence="2">
    <location>
        <begin position="25"/>
        <end position="28"/>
    </location>
</feature>
<feature type="repeat" description="3" evidence="2">
    <location>
        <begin position="31"/>
        <end position="34"/>
    </location>
</feature>
<feature type="repeat" description="4" evidence="2">
    <location>
        <begin position="38"/>
        <end position="41"/>
    </location>
</feature>
<feature type="repeat" description="5" evidence="2">
    <location>
        <begin position="44"/>
        <end position="47"/>
    </location>
</feature>
<feature type="repeat" description="6" evidence="2">
    <location>
        <begin position="51"/>
        <end position="54"/>
    </location>
</feature>
<feature type="repeat" description="7" evidence="2">
    <location>
        <begin position="57"/>
        <end position="60"/>
    </location>
</feature>
<feature type="repeat" description="8" evidence="2">
    <location>
        <begin position="64"/>
        <end position="67"/>
    </location>
</feature>
<feature type="repeat" description="9" evidence="2">
    <location>
        <begin position="70"/>
        <end position="73"/>
    </location>
</feature>
<feature type="repeat" description="10" evidence="2">
    <location>
        <begin position="77"/>
        <end position="80"/>
    </location>
</feature>
<feature type="repeat" description="11" evidence="2">
    <location>
        <begin position="83"/>
        <end position="86"/>
    </location>
</feature>
<feature type="repeat" description="12" evidence="2">
    <location>
        <begin position="91"/>
        <end position="94"/>
    </location>
</feature>
<feature type="repeat" description="13" evidence="2">
    <location>
        <begin position="99"/>
        <end position="102"/>
    </location>
</feature>
<feature type="repeat" description="14" evidence="2">
    <location>
        <begin position="106"/>
        <end position="109"/>
    </location>
</feature>
<feature type="repeat" description="15" evidence="2">
    <location>
        <begin position="134"/>
        <end position="137"/>
    </location>
</feature>
<feature type="repeat" description="16" evidence="2">
    <location>
        <begin position="144"/>
        <end position="147"/>
    </location>
</feature>
<feature type="repeat" description="17" evidence="2">
    <location>
        <begin position="151"/>
        <end position="154"/>
    </location>
</feature>
<feature type="repeat" description="18" evidence="2">
    <location>
        <begin position="158"/>
        <end position="161"/>
    </location>
</feature>
<feature type="repeat" description="19" evidence="2">
    <location>
        <begin position="165"/>
        <end position="168"/>
    </location>
</feature>
<comment type="function">
    <text evidence="1">Component of the cuticle of migratory locust which contains more than 100 different structural proteins.</text>
</comment>
<comment type="domain">
    <text evidence="2">The tetrapeptide (A-A-P-[AV]) repeats found throughout the protein are also present in many proteins constituting the protective envelope of other species.</text>
</comment>
<comment type="mass spectrometry"/>
<comment type="mass spectrometry"/>